<organism>
    <name type="scientific">Cereibacter sphaeroides (strain ATCC 17025 / ATH 2.4.3)</name>
    <name type="common">Rhodobacter sphaeroides</name>
    <dbReference type="NCBI Taxonomy" id="349102"/>
    <lineage>
        <taxon>Bacteria</taxon>
        <taxon>Pseudomonadati</taxon>
        <taxon>Pseudomonadota</taxon>
        <taxon>Alphaproteobacteria</taxon>
        <taxon>Rhodobacterales</taxon>
        <taxon>Paracoccaceae</taxon>
        <taxon>Cereibacter</taxon>
    </lineage>
</organism>
<evidence type="ECO:0000255" key="1">
    <source>
        <dbReference type="HAMAP-Rule" id="MF_01543"/>
    </source>
</evidence>
<feature type="chain" id="PRO_1000068791" description="Formate--tetrahydrofolate ligase">
    <location>
        <begin position="1"/>
        <end position="557"/>
    </location>
</feature>
<feature type="binding site" evidence="1">
    <location>
        <begin position="67"/>
        <end position="74"/>
    </location>
    <ligand>
        <name>ATP</name>
        <dbReference type="ChEBI" id="CHEBI:30616"/>
    </ligand>
</feature>
<name>FTHS_CERS5</name>
<reference key="1">
    <citation type="submission" date="2007-04" db="EMBL/GenBank/DDBJ databases">
        <title>Complete sequence of chromosome of Rhodobacter sphaeroides ATCC 17025.</title>
        <authorList>
            <consortium name="US DOE Joint Genome Institute"/>
            <person name="Copeland A."/>
            <person name="Lucas S."/>
            <person name="Lapidus A."/>
            <person name="Barry K."/>
            <person name="Detter J.C."/>
            <person name="Glavina del Rio T."/>
            <person name="Hammon N."/>
            <person name="Israni S."/>
            <person name="Dalin E."/>
            <person name="Tice H."/>
            <person name="Pitluck S."/>
            <person name="Chertkov O."/>
            <person name="Brettin T."/>
            <person name="Bruce D."/>
            <person name="Han C."/>
            <person name="Schmutz J."/>
            <person name="Larimer F."/>
            <person name="Land M."/>
            <person name="Hauser L."/>
            <person name="Kyrpides N."/>
            <person name="Kim E."/>
            <person name="Richardson P."/>
            <person name="Mackenzie C."/>
            <person name="Choudhary M."/>
            <person name="Donohue T.J."/>
            <person name="Kaplan S."/>
        </authorList>
    </citation>
    <scope>NUCLEOTIDE SEQUENCE [LARGE SCALE GENOMIC DNA]</scope>
    <source>
        <strain>ATCC 17025 / ATH 2.4.3</strain>
    </source>
</reference>
<dbReference type="EC" id="6.3.4.3" evidence="1"/>
<dbReference type="EMBL" id="CP000661">
    <property type="protein sequence ID" value="ABP69475.1"/>
    <property type="molecule type" value="Genomic_DNA"/>
</dbReference>
<dbReference type="SMR" id="A4WQ11"/>
<dbReference type="STRING" id="349102.Rsph17025_0569"/>
<dbReference type="KEGG" id="rsq:Rsph17025_0569"/>
<dbReference type="eggNOG" id="COG2759">
    <property type="taxonomic scope" value="Bacteria"/>
</dbReference>
<dbReference type="HOGENOM" id="CLU_003601_3_3_5"/>
<dbReference type="BioCyc" id="RSPH349102:G1G8M-586-MONOMER"/>
<dbReference type="UniPathway" id="UPA00193"/>
<dbReference type="GO" id="GO:0005524">
    <property type="term" value="F:ATP binding"/>
    <property type="evidence" value="ECO:0007669"/>
    <property type="project" value="UniProtKB-UniRule"/>
</dbReference>
<dbReference type="GO" id="GO:0004329">
    <property type="term" value="F:formate-tetrahydrofolate ligase activity"/>
    <property type="evidence" value="ECO:0007669"/>
    <property type="project" value="UniProtKB-UniRule"/>
</dbReference>
<dbReference type="GO" id="GO:0035999">
    <property type="term" value="P:tetrahydrofolate interconversion"/>
    <property type="evidence" value="ECO:0007669"/>
    <property type="project" value="UniProtKB-UniRule"/>
</dbReference>
<dbReference type="CDD" id="cd00477">
    <property type="entry name" value="FTHFS"/>
    <property type="match status" value="1"/>
</dbReference>
<dbReference type="FunFam" id="3.30.1510.10:FF:000001">
    <property type="entry name" value="Formate--tetrahydrofolate ligase"/>
    <property type="match status" value="1"/>
</dbReference>
<dbReference type="Gene3D" id="3.30.1510.10">
    <property type="entry name" value="Domain 2, N(10)-formyltetrahydrofolate synthetase"/>
    <property type="match status" value="1"/>
</dbReference>
<dbReference type="Gene3D" id="3.10.410.10">
    <property type="entry name" value="Formyltetrahydrofolate synthetase, domain 3"/>
    <property type="match status" value="1"/>
</dbReference>
<dbReference type="Gene3D" id="3.40.50.300">
    <property type="entry name" value="P-loop containing nucleotide triphosphate hydrolases"/>
    <property type="match status" value="1"/>
</dbReference>
<dbReference type="HAMAP" id="MF_01543">
    <property type="entry name" value="FTHFS"/>
    <property type="match status" value="1"/>
</dbReference>
<dbReference type="InterPro" id="IPR000559">
    <property type="entry name" value="Formate_THF_ligase"/>
</dbReference>
<dbReference type="InterPro" id="IPR020628">
    <property type="entry name" value="Formate_THF_ligase_CS"/>
</dbReference>
<dbReference type="InterPro" id="IPR027417">
    <property type="entry name" value="P-loop_NTPase"/>
</dbReference>
<dbReference type="NCBIfam" id="NF010030">
    <property type="entry name" value="PRK13505.1"/>
    <property type="match status" value="1"/>
</dbReference>
<dbReference type="Pfam" id="PF01268">
    <property type="entry name" value="FTHFS"/>
    <property type="match status" value="1"/>
</dbReference>
<dbReference type="SUPFAM" id="SSF52540">
    <property type="entry name" value="P-loop containing nucleoside triphosphate hydrolases"/>
    <property type="match status" value="1"/>
</dbReference>
<dbReference type="PROSITE" id="PS00721">
    <property type="entry name" value="FTHFS_1"/>
    <property type="match status" value="1"/>
</dbReference>
<dbReference type="PROSITE" id="PS00722">
    <property type="entry name" value="FTHFS_2"/>
    <property type="match status" value="1"/>
</dbReference>
<proteinExistence type="inferred from homology"/>
<accession>A4WQ11</accession>
<comment type="catalytic activity">
    <reaction evidence="1">
        <text>(6S)-5,6,7,8-tetrahydrofolate + formate + ATP = (6R)-10-formyltetrahydrofolate + ADP + phosphate</text>
        <dbReference type="Rhea" id="RHEA:20221"/>
        <dbReference type="ChEBI" id="CHEBI:15740"/>
        <dbReference type="ChEBI" id="CHEBI:30616"/>
        <dbReference type="ChEBI" id="CHEBI:43474"/>
        <dbReference type="ChEBI" id="CHEBI:57453"/>
        <dbReference type="ChEBI" id="CHEBI:195366"/>
        <dbReference type="ChEBI" id="CHEBI:456216"/>
        <dbReference type="EC" id="6.3.4.3"/>
    </reaction>
</comment>
<comment type="pathway">
    <text evidence="1">One-carbon metabolism; tetrahydrofolate interconversion.</text>
</comment>
<comment type="similarity">
    <text evidence="1">Belongs to the formate--tetrahydrofolate ligase family.</text>
</comment>
<keyword id="KW-0067">ATP-binding</keyword>
<keyword id="KW-0436">Ligase</keyword>
<keyword id="KW-0547">Nucleotide-binding</keyword>
<keyword id="KW-0554">One-carbon metabolism</keyword>
<gene>
    <name evidence="1" type="primary">fhs</name>
    <name type="ordered locus">Rsph17025_0569</name>
</gene>
<sequence>MTFQSDIEIARAANKLPIQEIGARLGIPSGDLIPYGHDKAKVSQGFIRGLADRPDGKLILVTAINPTPAGEGKTTTTVGLGDGLNRIGKRAVICIREASLGPNFGMKGGAAGGGRSQVVPMEDMNLHFTGDFHAITSAHNLLSAMIDNHIYWGNDLGLDARRITWRRVMDMNDRALRDMVVNLGGVSNGFPRQTGFDITVASEVMAILCLAEDLEDLERRLGGIVVGYRRDRSPVFCRDLKADGAMAVLLKDAMQPNLVQTIENNPAFVHGGPFANIAHGCNSVIATRTALKLADYVVTEAGFGADLGAEKFFDIKCRKAGLKPSAAVVVATVRALKMNGGVAREDLGREDVAALKRGCANLGRHIANVKGFGVPVVVAINHFTTDTEAEIEAVRAYAAGQGAEAILCRHWADGSAGIEDLARKVVQLAETPSMFAPLYPDEMPLFEKMETVARRIYHAHDVIADHVIRDQLRAWEDAGYGALPVCMAKTQYSFTTDAAIRGAPEGHSVPIREVRLSAGAGFVVAICGEIRTMPGLPREPAAEVIRLNGEGRIEGLF</sequence>
<protein>
    <recommendedName>
        <fullName evidence="1">Formate--tetrahydrofolate ligase</fullName>
        <ecNumber evidence="1">6.3.4.3</ecNumber>
    </recommendedName>
    <alternativeName>
        <fullName evidence="1">Formyltetrahydrofolate synthetase</fullName>
        <shortName evidence="1">FHS</shortName>
        <shortName evidence="1">FTHFS</shortName>
    </alternativeName>
</protein>